<keyword id="KW-0002">3D-structure</keyword>
<keyword id="KW-0067">ATP-binding</keyword>
<keyword id="KW-0997">Cell inner membrane</keyword>
<keyword id="KW-1003">Cell membrane</keyword>
<keyword id="KW-0406">Ion transport</keyword>
<keyword id="KW-0472">Membrane</keyword>
<keyword id="KW-0475">Mercuric resistance</keyword>
<keyword id="KW-0547">Nucleotide-binding</keyword>
<keyword id="KW-1185">Reference proteome</keyword>
<keyword id="KW-1278">Translocase</keyword>
<keyword id="KW-0812">Transmembrane</keyword>
<keyword id="KW-1133">Transmembrane helix</keyword>
<keyword id="KW-0813">Transport</keyword>
<sequence>MPPETATNPKDARHDGWQTLKRFLPYLWPADNAVLRRRVVGAILMVLLGKATTLALPFAYKKAVDAMTLGGGAQPALTVALAFVLAYALGRFSGVLFDNLRNIVFERVGQDATRHLAENVFARLHKLSLRFHLARRTGEVTKVIERGTKSIDTMLYFLLFNIAPTVIELTAVIVIFWLNFGLGLVTATILAVIAYVWTTRTITEWRTHLREKMNRLDGQALARAVDSLLNYETVKYFGAESREEARYASAARAYADAAVKSENSLGLLNIAQALIVNLLMAGAMAWTVYGWSQGKLTVGDLVFVNTYLTQLFRPLDMLGMVYRTIRQGLIDMAEMFRLIDTHIEVADVPNAPALVVNRPSVTFDNVVFGYDRDREILHGLSFEVAAGSRVAIVGPSGAGKSTIARLLFRFYDPWEGRILIDGQDIAHVTQTSLRAALGIVPQDSVLFNDTIGYNIAYGRDGASRAEVDAAAKGAAIADFIARLPQGYDTEVGERGLKLSGGEKQRVAIARTLVKNPPILLFDEATSALDTRTEQDILSTMRAVASHRTTISIAHRLSTIADSDTILVLDQGRLAEQGSHLDLLRRDGLYAEMWARQAAESAEVSEAAE</sequence>
<organism>
    <name type="scientific">Novosphingobium aromaticivorans (strain ATCC 700278 / DSM 12444 / CCUG 56034 / CIP 105152 / NBRC 16084 / F199)</name>
    <dbReference type="NCBI Taxonomy" id="279238"/>
    <lineage>
        <taxon>Bacteria</taxon>
        <taxon>Pseudomonadati</taxon>
        <taxon>Pseudomonadota</taxon>
        <taxon>Alphaproteobacteria</taxon>
        <taxon>Sphingomonadales</taxon>
        <taxon>Sphingomonadaceae</taxon>
        <taxon>Novosphingobium</taxon>
    </lineage>
</organism>
<proteinExistence type="evidence at protein level"/>
<evidence type="ECO:0000250" key="1">
    <source>
        <dbReference type="UniProtKB" id="P40416"/>
    </source>
</evidence>
<evidence type="ECO:0000250" key="2">
    <source>
        <dbReference type="UniProtKB" id="Q9NP58"/>
    </source>
</evidence>
<evidence type="ECO:0000255" key="3">
    <source>
        <dbReference type="PROSITE-ProRule" id="PRU00434"/>
    </source>
</evidence>
<evidence type="ECO:0000255" key="4">
    <source>
        <dbReference type="PROSITE-ProRule" id="PRU00441"/>
    </source>
</evidence>
<evidence type="ECO:0000269" key="5">
    <source>
    </source>
</evidence>
<evidence type="ECO:0000303" key="6">
    <source>
    </source>
</evidence>
<evidence type="ECO:0000305" key="7"/>
<evidence type="ECO:0007744" key="8">
    <source>
        <dbReference type="PDB" id="4MRP"/>
    </source>
</evidence>
<evidence type="ECO:0007829" key="9">
    <source>
        <dbReference type="PDB" id="4MRN"/>
    </source>
</evidence>
<evidence type="ECO:0007829" key="10">
    <source>
        <dbReference type="PDB" id="4MRR"/>
    </source>
</evidence>
<evidence type="ECO:0007829" key="11">
    <source>
        <dbReference type="PDB" id="4MRS"/>
    </source>
</evidence>
<evidence type="ECO:0007829" key="12">
    <source>
        <dbReference type="PDB" id="6PAQ"/>
    </source>
</evidence>
<evidence type="ECO:0007829" key="13">
    <source>
        <dbReference type="PDB" id="6PAR"/>
    </source>
</evidence>
<evidence type="ECO:0007829" key="14">
    <source>
        <dbReference type="PDB" id="6VQT"/>
    </source>
</evidence>
<accession>Q2G506</accession>
<comment type="function">
    <text evidence="5">Mediates the ATP-dependent export of glutathione-conjugated substrates, such as heavy metal-glutathione conjugates. ATP hydrolysis is stimulated by glutathione binding. Protects cells against toxic heavy metal ions, such as silver and mercury ions. May also mediate the transport of glutathione-conjugated aromatic hydrocarbons, such as dinitrobenzene.</text>
</comment>
<comment type="subunit">
    <text evidence="5">Homodimer.</text>
</comment>
<comment type="subcellular location">
    <subcellularLocation>
        <location evidence="5">Cell inner membrane</location>
        <topology evidence="4 5">Multi-pass membrane protein</topology>
    </subcellularLocation>
</comment>
<comment type="similarity">
    <text evidence="7">Belongs to the ABC transporter superfamily. ABCB family. Heavy Metal importer (TC 3.A.1.210) subfamily.</text>
</comment>
<gene>
    <name type="primary">atm1</name>
    <name type="ordered locus">Saro_2631</name>
</gene>
<dbReference type="EC" id="7.-.-.-" evidence="5"/>
<dbReference type="EMBL" id="CP000248">
    <property type="protein sequence ID" value="ABD27067.1"/>
    <property type="molecule type" value="Genomic_DNA"/>
</dbReference>
<dbReference type="RefSeq" id="WP_011446273.1">
    <property type="nucleotide sequence ID" value="NC_007794.1"/>
</dbReference>
<dbReference type="PDB" id="4MRN">
    <property type="method" value="X-ray"/>
    <property type="resolution" value="2.50 A"/>
    <property type="chains" value="A/B=1-608"/>
</dbReference>
<dbReference type="PDB" id="4MRP">
    <property type="method" value="X-ray"/>
    <property type="resolution" value="2.50 A"/>
    <property type="chains" value="A/B=1-608"/>
</dbReference>
<dbReference type="PDB" id="4MRR">
    <property type="method" value="X-ray"/>
    <property type="resolution" value="2.97 A"/>
    <property type="chains" value="A/B=1-608"/>
</dbReference>
<dbReference type="PDB" id="4MRS">
    <property type="method" value="X-ray"/>
    <property type="resolution" value="2.35 A"/>
    <property type="chains" value="A/B=1-608"/>
</dbReference>
<dbReference type="PDB" id="4MRV">
    <property type="method" value="X-ray"/>
    <property type="resolution" value="2.50 A"/>
    <property type="chains" value="A/B=1-608"/>
</dbReference>
<dbReference type="PDB" id="6PAM">
    <property type="method" value="X-ray"/>
    <property type="resolution" value="3.70 A"/>
    <property type="chains" value="A/B/C/D/E/F/G/H=1-608"/>
</dbReference>
<dbReference type="PDB" id="6PAN">
    <property type="method" value="X-ray"/>
    <property type="resolution" value="3.40 A"/>
    <property type="chains" value="A/B=1-608"/>
</dbReference>
<dbReference type="PDB" id="6PAO">
    <property type="method" value="X-ray"/>
    <property type="resolution" value="3.65 A"/>
    <property type="chains" value="A/B=1-608"/>
</dbReference>
<dbReference type="PDB" id="6PAQ">
    <property type="method" value="X-ray"/>
    <property type="resolution" value="3.30 A"/>
    <property type="chains" value="A/B=1-608"/>
</dbReference>
<dbReference type="PDB" id="6PAR">
    <property type="method" value="X-ray"/>
    <property type="resolution" value="3.35 A"/>
    <property type="chains" value="A/B/C/D/E/F=1-608"/>
</dbReference>
<dbReference type="PDB" id="6VQT">
    <property type="method" value="EM"/>
    <property type="resolution" value="3.03 A"/>
    <property type="chains" value="A/B=1-608"/>
</dbReference>
<dbReference type="PDB" id="6VQU">
    <property type="method" value="EM"/>
    <property type="resolution" value="3.88 A"/>
    <property type="chains" value="A/B=1-608"/>
</dbReference>
<dbReference type="PDBsum" id="4MRN"/>
<dbReference type="PDBsum" id="4MRP"/>
<dbReference type="PDBsum" id="4MRR"/>
<dbReference type="PDBsum" id="4MRS"/>
<dbReference type="PDBsum" id="4MRV"/>
<dbReference type="PDBsum" id="6PAM"/>
<dbReference type="PDBsum" id="6PAN"/>
<dbReference type="PDBsum" id="6PAO"/>
<dbReference type="PDBsum" id="6PAQ"/>
<dbReference type="PDBsum" id="6PAR"/>
<dbReference type="PDBsum" id="6VQT"/>
<dbReference type="PDBsum" id="6VQU"/>
<dbReference type="EMDB" id="EMD-21356"/>
<dbReference type="EMDB" id="EMD-21357"/>
<dbReference type="SMR" id="Q2G506"/>
<dbReference type="DIP" id="DIP-61368N"/>
<dbReference type="STRING" id="279238.Saro_2631"/>
<dbReference type="TCDB" id="3.A.1.210.11">
    <property type="family name" value="the atp-binding cassette (abc) superfamily"/>
</dbReference>
<dbReference type="KEGG" id="nar:Saro_2631"/>
<dbReference type="eggNOG" id="COG5265">
    <property type="taxonomic scope" value="Bacteria"/>
</dbReference>
<dbReference type="HOGENOM" id="CLU_000604_84_1_5"/>
<dbReference type="EvolutionaryTrace" id="Q2G506"/>
<dbReference type="PRO" id="PR:Q2G506"/>
<dbReference type="Proteomes" id="UP000009134">
    <property type="component" value="Chromosome"/>
</dbReference>
<dbReference type="GO" id="GO:0005886">
    <property type="term" value="C:plasma membrane"/>
    <property type="evidence" value="ECO:0007669"/>
    <property type="project" value="UniProtKB-SubCell"/>
</dbReference>
<dbReference type="GO" id="GO:0140359">
    <property type="term" value="F:ABC-type transporter activity"/>
    <property type="evidence" value="ECO:0007669"/>
    <property type="project" value="InterPro"/>
</dbReference>
<dbReference type="GO" id="GO:0005524">
    <property type="term" value="F:ATP binding"/>
    <property type="evidence" value="ECO:0007669"/>
    <property type="project" value="UniProtKB-KW"/>
</dbReference>
<dbReference type="GO" id="GO:0016887">
    <property type="term" value="F:ATP hydrolysis activity"/>
    <property type="evidence" value="ECO:0007669"/>
    <property type="project" value="InterPro"/>
</dbReference>
<dbReference type="GO" id="GO:0006811">
    <property type="term" value="P:monoatomic ion transport"/>
    <property type="evidence" value="ECO:0007669"/>
    <property type="project" value="UniProtKB-KW"/>
</dbReference>
<dbReference type="GO" id="GO:0046689">
    <property type="term" value="P:response to mercury ion"/>
    <property type="evidence" value="ECO:0007669"/>
    <property type="project" value="UniProtKB-KW"/>
</dbReference>
<dbReference type="CDD" id="cd18582">
    <property type="entry name" value="ABC_6TM_ATM1_ABCB7"/>
    <property type="match status" value="1"/>
</dbReference>
<dbReference type="FunFam" id="3.40.50.300:FF:000186">
    <property type="entry name" value="ATP-binding cassette sub-family B member 7, mitochondrial"/>
    <property type="match status" value="1"/>
</dbReference>
<dbReference type="Gene3D" id="1.20.1560.10">
    <property type="entry name" value="ABC transporter type 1, transmembrane domain"/>
    <property type="match status" value="1"/>
</dbReference>
<dbReference type="Gene3D" id="3.40.50.300">
    <property type="entry name" value="P-loop containing nucleotide triphosphate hydrolases"/>
    <property type="match status" value="1"/>
</dbReference>
<dbReference type="InterPro" id="IPR003593">
    <property type="entry name" value="AAA+_ATPase"/>
</dbReference>
<dbReference type="InterPro" id="IPR011527">
    <property type="entry name" value="ABC1_TM_dom"/>
</dbReference>
<dbReference type="InterPro" id="IPR036640">
    <property type="entry name" value="ABC1_TM_sf"/>
</dbReference>
<dbReference type="InterPro" id="IPR003439">
    <property type="entry name" value="ABC_transporter-like_ATP-bd"/>
</dbReference>
<dbReference type="InterPro" id="IPR017871">
    <property type="entry name" value="ABC_transporter-like_CS"/>
</dbReference>
<dbReference type="InterPro" id="IPR027417">
    <property type="entry name" value="P-loop_NTPase"/>
</dbReference>
<dbReference type="InterPro" id="IPR039421">
    <property type="entry name" value="Type_1_exporter"/>
</dbReference>
<dbReference type="PANTHER" id="PTHR24221">
    <property type="entry name" value="ATP-BINDING CASSETTE SUB-FAMILY B"/>
    <property type="match status" value="1"/>
</dbReference>
<dbReference type="PANTHER" id="PTHR24221:SF654">
    <property type="entry name" value="ATP-BINDING CASSETTE SUB-FAMILY B MEMBER 6"/>
    <property type="match status" value="1"/>
</dbReference>
<dbReference type="Pfam" id="PF00664">
    <property type="entry name" value="ABC_membrane"/>
    <property type="match status" value="1"/>
</dbReference>
<dbReference type="Pfam" id="PF00005">
    <property type="entry name" value="ABC_tran"/>
    <property type="match status" value="1"/>
</dbReference>
<dbReference type="SMART" id="SM00382">
    <property type="entry name" value="AAA"/>
    <property type="match status" value="1"/>
</dbReference>
<dbReference type="SUPFAM" id="SSF90123">
    <property type="entry name" value="ABC transporter transmembrane region"/>
    <property type="match status" value="1"/>
</dbReference>
<dbReference type="SUPFAM" id="SSF52540">
    <property type="entry name" value="P-loop containing nucleoside triphosphate hydrolases"/>
    <property type="match status" value="1"/>
</dbReference>
<dbReference type="PROSITE" id="PS50929">
    <property type="entry name" value="ABC_TM1F"/>
    <property type="match status" value="1"/>
</dbReference>
<dbReference type="PROSITE" id="PS00211">
    <property type="entry name" value="ABC_TRANSPORTER_1"/>
    <property type="match status" value="1"/>
</dbReference>
<dbReference type="PROSITE" id="PS50893">
    <property type="entry name" value="ABC_TRANSPORTER_2"/>
    <property type="match status" value="1"/>
</dbReference>
<feature type="chain" id="PRO_0000429375" description="ATM1-type heavy metal exporter">
    <location>
        <begin position="1"/>
        <end position="608"/>
    </location>
</feature>
<feature type="topological domain" description="Cytoplasmic" evidence="5">
    <location>
        <begin position="1"/>
        <end position="38"/>
    </location>
</feature>
<feature type="transmembrane region" description="Helical">
    <location>
        <begin position="39"/>
        <end position="60"/>
    </location>
</feature>
<feature type="topological domain" description="Periplasmic" evidence="5">
    <location>
        <begin position="61"/>
        <end position="82"/>
    </location>
</feature>
<feature type="transmembrane region" description="Helical">
    <location>
        <begin position="83"/>
        <end position="105"/>
    </location>
</feature>
<feature type="topological domain" description="Cytoplasmic" evidence="5">
    <location>
        <begin position="106"/>
        <end position="154"/>
    </location>
</feature>
<feature type="transmembrane region" description="Helical">
    <location>
        <begin position="155"/>
        <end position="178"/>
    </location>
</feature>
<feature type="topological domain" description="Periplasmic" evidence="5">
    <location>
        <position position="179"/>
    </location>
</feature>
<feature type="transmembrane region" description="Helical">
    <location>
        <begin position="180"/>
        <end position="202"/>
    </location>
</feature>
<feature type="topological domain" description="Cytoplasmic" evidence="5">
    <location>
        <begin position="203"/>
        <end position="266"/>
    </location>
</feature>
<feature type="transmembrane region" description="Helical">
    <location>
        <begin position="267"/>
        <end position="285"/>
    </location>
</feature>
<feature type="topological domain" description="Periplasmic" evidence="5">
    <location>
        <begin position="286"/>
        <end position="300"/>
    </location>
</feature>
<feature type="transmembrane region" description="Helical">
    <location>
        <begin position="301"/>
        <end position="322"/>
    </location>
</feature>
<feature type="topological domain" description="Cytoplasmic" evidence="5">
    <location>
        <begin position="323"/>
        <end position="608"/>
    </location>
</feature>
<feature type="domain" description="ABC transmembrane type-1" evidence="4">
    <location>
        <begin position="39"/>
        <end position="327"/>
    </location>
</feature>
<feature type="domain" description="ABC transporter" evidence="3">
    <location>
        <begin position="361"/>
        <end position="595"/>
    </location>
</feature>
<feature type="binding site" evidence="1">
    <location>
        <begin position="206"/>
        <end position="210"/>
    </location>
    <ligand>
        <name>glutathione</name>
        <dbReference type="ChEBI" id="CHEBI:57925"/>
    </ligand>
</feature>
<feature type="binding site" evidence="5 8">
    <location>
        <begin position="269"/>
        <end position="272"/>
    </location>
    <ligand>
        <name>glutathione</name>
        <dbReference type="ChEBI" id="CHEBI:57925"/>
    </ligand>
</feature>
<feature type="binding site" evidence="5 8">
    <location>
        <begin position="316"/>
        <end position="319"/>
    </location>
    <ligand>
        <name>glutathione</name>
        <dbReference type="ChEBI" id="CHEBI:57925"/>
    </ligand>
</feature>
<feature type="binding site" evidence="2">
    <location>
        <position position="370"/>
    </location>
    <ligand>
        <name>ATP</name>
        <dbReference type="ChEBI" id="CHEBI:30616"/>
    </ligand>
</feature>
<feature type="binding site" evidence="3">
    <location>
        <begin position="394"/>
        <end position="405"/>
    </location>
    <ligand>
        <name>ATP</name>
        <dbReference type="ChEBI" id="CHEBI:30616"/>
    </ligand>
</feature>
<feature type="mutagenesis site" description="Strongly increases basal rate of ATP hydrolysis." evidence="5">
    <original>Y</original>
    <variation>F</variation>
    <location>
        <position position="195"/>
    </location>
</feature>
<feature type="mutagenesis site" description="Increases basal rate of ATP hydrolysis and abolishes stimulation of ATP hydrolysis by glutathione." evidence="5">
    <original>N</original>
    <variation>A</variation>
    <location>
        <position position="269"/>
    </location>
</feature>
<feature type="mutagenesis site" description="Abolishes glutathione-dependent ATP hydrolysis." evidence="5">
    <original>Q</original>
    <variation>A</variation>
    <location>
        <position position="272"/>
    </location>
</feature>
<feature type="mutagenesis site" description="Abolishes glutathione-dependent ATP hydrolysis." evidence="5">
    <original>G</original>
    <variation>L</variation>
    <location>
        <position position="319"/>
    </location>
</feature>
<feature type="mutagenesis site" description="Abolishes transporter activity." evidence="5">
    <original>E</original>
    <variation>Q</variation>
    <location>
        <position position="523"/>
    </location>
</feature>
<feature type="strand" evidence="11">
    <location>
        <begin position="10"/>
        <end position="12"/>
    </location>
</feature>
<feature type="helix" evidence="11">
    <location>
        <begin position="16"/>
        <end position="27"/>
    </location>
</feature>
<feature type="helix" evidence="13">
    <location>
        <begin position="28"/>
        <end position="32"/>
    </location>
</feature>
<feature type="helix" evidence="11">
    <location>
        <begin position="34"/>
        <end position="68"/>
    </location>
</feature>
<feature type="turn" evidence="9">
    <location>
        <begin position="70"/>
        <end position="72"/>
    </location>
</feature>
<feature type="strand" evidence="9">
    <location>
        <begin position="73"/>
        <end position="75"/>
    </location>
</feature>
<feature type="helix" evidence="11">
    <location>
        <begin position="76"/>
        <end position="126"/>
    </location>
</feature>
<feature type="helix" evidence="11">
    <location>
        <begin position="129"/>
        <end position="131"/>
    </location>
</feature>
<feature type="helix" evidence="11">
    <location>
        <begin position="137"/>
        <end position="160"/>
    </location>
</feature>
<feature type="helix" evidence="11">
    <location>
        <begin position="162"/>
        <end position="179"/>
    </location>
</feature>
<feature type="helix" evidence="11">
    <location>
        <begin position="183"/>
        <end position="229"/>
    </location>
</feature>
<feature type="helix" evidence="11">
    <location>
        <begin position="231"/>
        <end position="236"/>
    </location>
</feature>
<feature type="helix" evidence="11">
    <location>
        <begin position="240"/>
        <end position="292"/>
    </location>
</feature>
<feature type="strand" evidence="12">
    <location>
        <begin position="295"/>
        <end position="297"/>
    </location>
</feature>
<feature type="helix" evidence="11">
    <location>
        <begin position="299"/>
        <end position="312"/>
    </location>
</feature>
<feature type="helix" evidence="11">
    <location>
        <begin position="314"/>
        <end position="317"/>
    </location>
</feature>
<feature type="helix" evidence="11">
    <location>
        <begin position="318"/>
        <end position="340"/>
    </location>
</feature>
<feature type="strand" evidence="11">
    <location>
        <begin position="361"/>
        <end position="368"/>
    </location>
</feature>
<feature type="strand" evidence="11">
    <location>
        <begin position="377"/>
        <end position="384"/>
    </location>
</feature>
<feature type="strand" evidence="11">
    <location>
        <begin position="389"/>
        <end position="393"/>
    </location>
</feature>
<feature type="helix" evidence="11">
    <location>
        <begin position="400"/>
        <end position="402"/>
    </location>
</feature>
<feature type="helix" evidence="11">
    <location>
        <begin position="403"/>
        <end position="407"/>
    </location>
</feature>
<feature type="strand" evidence="11">
    <location>
        <begin position="414"/>
        <end position="420"/>
    </location>
</feature>
<feature type="helix" evidence="11">
    <location>
        <begin position="425"/>
        <end position="427"/>
    </location>
</feature>
<feature type="helix" evidence="11">
    <location>
        <begin position="430"/>
        <end position="435"/>
    </location>
</feature>
<feature type="strand" evidence="11">
    <location>
        <begin position="437"/>
        <end position="443"/>
    </location>
</feature>
<feature type="strand" evidence="11">
    <location>
        <begin position="448"/>
        <end position="450"/>
    </location>
</feature>
<feature type="helix" evidence="11">
    <location>
        <begin position="451"/>
        <end position="456"/>
    </location>
</feature>
<feature type="helix" evidence="11">
    <location>
        <begin position="464"/>
        <end position="473"/>
    </location>
</feature>
<feature type="helix" evidence="11">
    <location>
        <begin position="477"/>
        <end position="481"/>
    </location>
</feature>
<feature type="strand" evidence="10">
    <location>
        <begin position="483"/>
        <end position="485"/>
    </location>
</feature>
<feature type="helix" evidence="11">
    <location>
        <begin position="486"/>
        <end position="488"/>
    </location>
</feature>
<feature type="strand" evidence="11">
    <location>
        <begin position="490"/>
        <end position="492"/>
    </location>
</feature>
<feature type="helix" evidence="14">
    <location>
        <begin position="493"/>
        <end position="495"/>
    </location>
</feature>
<feature type="helix" evidence="11">
    <location>
        <begin position="500"/>
        <end position="514"/>
    </location>
</feature>
<feature type="strand" evidence="11">
    <location>
        <begin position="517"/>
        <end position="523"/>
    </location>
</feature>
<feature type="turn" evidence="11">
    <location>
        <begin position="524"/>
        <end position="527"/>
    </location>
</feature>
<feature type="helix" evidence="11">
    <location>
        <begin position="530"/>
        <end position="543"/>
    </location>
</feature>
<feature type="turn" evidence="11">
    <location>
        <begin position="544"/>
        <end position="546"/>
    </location>
</feature>
<feature type="strand" evidence="11">
    <location>
        <begin position="547"/>
        <end position="552"/>
    </location>
</feature>
<feature type="helix" evidence="11">
    <location>
        <begin position="556"/>
        <end position="559"/>
    </location>
</feature>
<feature type="strand" evidence="11">
    <location>
        <begin position="563"/>
        <end position="569"/>
    </location>
</feature>
<feature type="strand" evidence="11">
    <location>
        <begin position="572"/>
        <end position="577"/>
    </location>
</feature>
<feature type="helix" evidence="11">
    <location>
        <begin position="579"/>
        <end position="585"/>
    </location>
</feature>
<feature type="helix" evidence="11">
    <location>
        <begin position="588"/>
        <end position="605"/>
    </location>
</feature>
<name>ATM1_NOVAD</name>
<protein>
    <recommendedName>
        <fullName evidence="7">ATM1-type heavy metal exporter</fullName>
        <ecNumber evidence="5">7.-.-.-</ecNumber>
    </recommendedName>
    <alternativeName>
        <fullName evidence="7">ATP-binding cassette transporter Atm1</fullName>
        <shortName evidence="6">NaAtm1</shortName>
    </alternativeName>
</protein>
<reference key="1">
    <citation type="submission" date="2006-01" db="EMBL/GenBank/DDBJ databases">
        <title>Complete sequence of Novosphingobium aromaticivorans DSM 12444.</title>
        <authorList>
            <consortium name="US DOE Joint Genome Institute"/>
            <person name="Copeland A."/>
            <person name="Lucas S."/>
            <person name="Lapidus A."/>
            <person name="Barry K."/>
            <person name="Detter J.C."/>
            <person name="Glavina T."/>
            <person name="Hammon N."/>
            <person name="Israni S."/>
            <person name="Pitluck S."/>
            <person name="Chain P."/>
            <person name="Malfatti S."/>
            <person name="Shin M."/>
            <person name="Vergez L."/>
            <person name="Schmutz J."/>
            <person name="Larimer F."/>
            <person name="Land M."/>
            <person name="Kyrpides N."/>
            <person name="Ivanova N."/>
            <person name="Fredrickson J."/>
            <person name="Balkwill D."/>
            <person name="Romine M.F."/>
            <person name="Richardson P."/>
        </authorList>
    </citation>
    <scope>NUCLEOTIDE SEQUENCE [LARGE SCALE GENOMIC DNA]</scope>
    <source>
        <strain>ATCC 700278 / DSM 12444 / CCUG 56034 / CIP 105152 / NBRC 16084 / F199</strain>
    </source>
</reference>
<reference key="2">
    <citation type="journal article" date="2014" name="Science">
        <title>Structural basis for heavy metal detoxification by an Atm1-type ABC exporter.</title>
        <authorList>
            <person name="Lee J.Y."/>
            <person name="Yang J.G."/>
            <person name="Zhitnitsky D."/>
            <person name="Lewinson O."/>
            <person name="Rees D.C."/>
        </authorList>
    </citation>
    <scope>X-RAY CRYSTALLOGRAPHY (2.35 ANGSTROMS) IN COMPLEXES WITH GLUTATHIONE AND PHOSPHATE</scope>
    <scope>FUNCTION</scope>
    <scope>SUBCELLULAR LOCATION</scope>
    <scope>SUBUNIT</scope>
    <scope>TOPOLOGY</scope>
    <scope>MUTAGENESIS OF TYR-195; ASN-269; GLN-272; GLY-319 AND GLU-523</scope>
    <source>
        <strain>ATCC 700278 / DSM 12444 / CCUG 56034 / CIP 105152 / NBRC 16084 / F199</strain>
    </source>
</reference>